<dbReference type="EMBL" id="AF139760">
    <property type="protein sequence ID" value="AAG00069.1"/>
    <property type="molecule type" value="Genomic_RNA"/>
</dbReference>
<dbReference type="RefSeq" id="NP_690894.1">
    <property type="nucleotide sequence ID" value="NC_004184.1"/>
</dbReference>
<dbReference type="GeneID" id="993312"/>
<dbReference type="KEGG" id="vg:993312"/>
<dbReference type="Proteomes" id="UP000001675">
    <property type="component" value="Genome"/>
</dbReference>
<organism>
    <name type="scientific">Colorado tick fever virus (strain USA/Florio N-7180)</name>
    <name type="common">CTFV</name>
    <dbReference type="NCBI Taxonomy" id="648168"/>
    <lineage>
        <taxon>Viruses</taxon>
        <taxon>Riboviria</taxon>
        <taxon>Orthornavirae</taxon>
        <taxon>Duplornaviricota</taxon>
        <taxon>Resentoviricetes</taxon>
        <taxon>Reovirales</taxon>
        <taxon>Spinareoviridae</taxon>
        <taxon>Coltivirus</taxon>
        <taxon>Colorado tick fever coltivirus</taxon>
    </lineage>
</organism>
<keyword id="KW-1185">Reference proteome</keyword>
<sequence>MGNRVSTYSPQFITINGNNNALDTKTMERFDQTNSVDAAVKLPDGINPTRAEFSTVNDMRAFLGLRDDLLCEDDDIFEDMFDQMVGSEGKIKGVVSGTLDGYEKIRKAANWLGGTYSRPWRVETREMSEIQKRIDTALPAMTSIIGGTFGPGAARVGGDHMLVRPEQWVNVRGDFFLGHDDGFESRHIAVGTDAFQCVRLGRLMPEFGDAVRGGGWANGVSYLMGQPLFQIAYGRVVNDVDRPIQILWQAALRTAASSEGDVPVAEALKILGAMTKSTFSWMVSIVGTEYSMEATAERPMFPMTHLTSADYELLHRLFVMWLKGDVMHSRFFDVVANLESFTSGMCFLNRVRLALQLFVTKLDEETKSRQDYWCDMLNQLMEVHSCPLLYTAFLLSGGWNDEVSMKVEPIDGVVLERLEFSGRYLWMSWRNAATYSEYVRMHAEGGDGDDDILGLLKRGAAQMKGMVAGHLRPVLNEAAGAAERVMTGWAKQKAGTLKQAVTNAMAGVLLDTKREAQAEANVYGSMVGGRHVLALPPTDHLQKLAPLVPPGAADTVIDDVKRVGHHVGLAIMERGEPVREPVVENHVVHEMVNRTKTGVGQIGEVRRELAKCSEVMKDVSVEKMVARPDEVRGTSFPIHTRGYHVSLVDGCDKHAMKDPTNNLAAGATFSCQGLVTGKLKTCFSVTLAKAHHNRETSPTTLHVISGGFFSYDPAAVHIGGQDGGGPDHDMNINVVVTAAVKKSTSETACKVYVGAIAKSPNTTHHTTNNGVGFVPAIDDKGQTYFTTSGVFVGRLSFNISALLRGGLTGVTSCPWDGTFAFVVACGCSNYGSSGCTHVELVQLGVEFGECIIVPRGLDRYYIFNRVRYYDKTIFDFIGRVDATVAVSESPLDVVSAWSELISPLVVYLPLMVHELKSANTLALVKTRYRAWLKKVGLKMGENNPFRTDEDCDGWVCAAILAMPMWMRYAGGNPLIIMTQDDRKASAIMLLSTAKAMLPLSAFQLVDGSLSRAAAKGLKWAADREIMG</sequence>
<protein>
    <recommendedName>
        <fullName>Uncharacterized protein VP4</fullName>
    </recommendedName>
</protein>
<reference key="1">
    <citation type="journal article" date="2000" name="Biochem. Biophys. Res. Commun.">
        <title>Sequence determination and analysis of the full-length genome of colorado tick fever virus, the type species of genus Coltivirus (Family Reoviridae).</title>
        <authorList>
            <person name="Attoui H."/>
            <person name="Billoir F."/>
            <person name="Biagini P."/>
            <person name="Cantaloube J.F."/>
            <person name="de Chesse R."/>
            <person name="de Micco P."/>
            <person name="de Lamballerie X."/>
        </authorList>
    </citation>
    <scope>NUCLEOTIDE SEQUENCE [GENOMIC RNA]</scope>
</reference>
<name>VP4_CTFVL</name>
<feature type="chain" id="PRO_0000403192" description="Uncharacterized protein VP4">
    <location>
        <begin position="1"/>
        <end position="1027"/>
    </location>
</feature>
<organismHost>
    <name type="scientific">Callospermophilus lateralis</name>
    <name type="common">Golden-mantled ground squirrel</name>
    <name type="synonym">Spermophilus lateralis</name>
    <dbReference type="NCBI Taxonomy" id="76772"/>
</organismHost>
<organismHost>
    <name type="scientific">Dermacentor andersoni</name>
    <name type="common">Rocky mountain wood tick</name>
    <dbReference type="NCBI Taxonomy" id="34620"/>
</organismHost>
<organismHost>
    <name type="scientific">Erethizon dorsatum</name>
    <name type="common">North American porcupine</name>
    <name type="synonym">Hystrix dorsata</name>
    <dbReference type="NCBI Taxonomy" id="34844"/>
</organismHost>
<organismHost>
    <name type="scientific">Homo sapiens</name>
    <name type="common">Human</name>
    <dbReference type="NCBI Taxonomy" id="9606"/>
</organismHost>
<organismHost>
    <name type="scientific">Neotoma cinerea</name>
    <name type="common">Bushy-tailed woodrat</name>
    <name type="synonym">Mus cinereus</name>
    <dbReference type="NCBI Taxonomy" id="105147"/>
</organismHost>
<organismHost>
    <name type="scientific">Peromyscus maniculatus</name>
    <name type="common">North American deer mouse</name>
    <dbReference type="NCBI Taxonomy" id="10042"/>
</organismHost>
<accession>Q9ENL2</accession>
<proteinExistence type="predicted"/>